<gene>
    <name evidence="8" type="primary">DNAI3</name>
    <name type="synonym">WDR63</name>
</gene>
<organism>
    <name type="scientific">Homo sapiens</name>
    <name type="common">Human</name>
    <dbReference type="NCBI Taxonomy" id="9606"/>
    <lineage>
        <taxon>Eukaryota</taxon>
        <taxon>Metazoa</taxon>
        <taxon>Chordata</taxon>
        <taxon>Craniata</taxon>
        <taxon>Vertebrata</taxon>
        <taxon>Euteleostomi</taxon>
        <taxon>Mammalia</taxon>
        <taxon>Eutheria</taxon>
        <taxon>Euarchontoglires</taxon>
        <taxon>Primates</taxon>
        <taxon>Haplorrhini</taxon>
        <taxon>Catarrhini</taxon>
        <taxon>Hominidae</taxon>
        <taxon>Homo</taxon>
    </lineage>
</organism>
<accession>Q8IWG1</accession>
<accession>A8K988</accession>
<accession>Q96L72</accession>
<accession>Q96NU4</accession>
<dbReference type="EMBL" id="AY049724">
    <property type="protein sequence ID" value="AAL06239.1"/>
    <property type="molecule type" value="mRNA"/>
</dbReference>
<dbReference type="EMBL" id="AK054629">
    <property type="protein sequence ID" value="BAB70778.1"/>
    <property type="molecule type" value="mRNA"/>
</dbReference>
<dbReference type="EMBL" id="AK292603">
    <property type="protein sequence ID" value="BAF85292.1"/>
    <property type="molecule type" value="mRNA"/>
</dbReference>
<dbReference type="EMBL" id="AL358789">
    <property type="status" value="NOT_ANNOTATED_CDS"/>
    <property type="molecule type" value="Genomic_DNA"/>
</dbReference>
<dbReference type="EMBL" id="CH471097">
    <property type="protein sequence ID" value="EAW73212.1"/>
    <property type="molecule type" value="Genomic_DNA"/>
</dbReference>
<dbReference type="EMBL" id="BC040265">
    <property type="protein sequence ID" value="AAH40265.1"/>
    <property type="molecule type" value="mRNA"/>
</dbReference>
<dbReference type="CCDS" id="CCDS702.1">
    <molecule id="Q8IWG1-1"/>
</dbReference>
<dbReference type="CCDS" id="CCDS72818.1">
    <molecule id="Q8IWG1-2"/>
</dbReference>
<dbReference type="RefSeq" id="NP_001275492.1">
    <molecule id="Q8IWG1-2"/>
    <property type="nucleotide sequence ID" value="NM_001288563.2"/>
</dbReference>
<dbReference type="RefSeq" id="NP_660155.2">
    <molecule id="Q8IWG1-1"/>
    <property type="nucleotide sequence ID" value="NM_145172.5"/>
</dbReference>
<dbReference type="PDB" id="8J07">
    <property type="method" value="EM"/>
    <property type="resolution" value="4.10 A"/>
    <property type="chains" value="k1=1-891"/>
</dbReference>
<dbReference type="PDBsum" id="8J07"/>
<dbReference type="EMDB" id="EMD-35888"/>
<dbReference type="SMR" id="Q8IWG1"/>
<dbReference type="BioGRID" id="126018">
    <property type="interactions" value="3"/>
</dbReference>
<dbReference type="FunCoup" id="Q8IWG1">
    <property type="interactions" value="25"/>
</dbReference>
<dbReference type="IntAct" id="Q8IWG1">
    <property type="interactions" value="2"/>
</dbReference>
<dbReference type="STRING" id="9606.ENSP00000294664"/>
<dbReference type="GlyGen" id="Q8IWG1">
    <property type="glycosylation" value="1 site, 2 O-linked glycans (1 site)"/>
</dbReference>
<dbReference type="iPTMnet" id="Q8IWG1"/>
<dbReference type="PhosphoSitePlus" id="Q8IWG1"/>
<dbReference type="BioMuta" id="WDR63"/>
<dbReference type="DMDM" id="74759634"/>
<dbReference type="MassIVE" id="Q8IWG1"/>
<dbReference type="PaxDb" id="9606-ENSP00000294664"/>
<dbReference type="PeptideAtlas" id="Q8IWG1"/>
<dbReference type="ProteomicsDB" id="70858">
    <molecule id="Q8IWG1-1"/>
</dbReference>
<dbReference type="ProteomicsDB" id="70859">
    <molecule id="Q8IWG1-2"/>
</dbReference>
<dbReference type="Antibodypedia" id="33558">
    <property type="antibodies" value="30 antibodies from 14 providers"/>
</dbReference>
<dbReference type="DNASU" id="126820"/>
<dbReference type="Ensembl" id="ENST00000294664.11">
    <molecule id="Q8IWG1-1"/>
    <property type="protein sequence ID" value="ENSP00000294664.6"/>
    <property type="gene ID" value="ENSG00000162643.13"/>
</dbReference>
<dbReference type="Ensembl" id="ENST00000326813.12">
    <molecule id="Q8IWG1-2"/>
    <property type="protein sequence ID" value="ENSP00000317463.8"/>
    <property type="gene ID" value="ENSG00000162643.13"/>
</dbReference>
<dbReference type="Ensembl" id="ENST00000370596.5">
    <molecule id="Q8IWG1-2"/>
    <property type="protein sequence ID" value="ENSP00000359628.1"/>
    <property type="gene ID" value="ENSG00000162643.13"/>
</dbReference>
<dbReference type="GeneID" id="126820"/>
<dbReference type="KEGG" id="hsa:126820"/>
<dbReference type="MANE-Select" id="ENST00000294664.11">
    <property type="protein sequence ID" value="ENSP00000294664.6"/>
    <property type="RefSeq nucleotide sequence ID" value="NM_145172.5"/>
    <property type="RefSeq protein sequence ID" value="NP_660155.2"/>
</dbReference>
<dbReference type="UCSC" id="uc001dkt.5">
    <molecule id="Q8IWG1-1"/>
    <property type="organism name" value="human"/>
</dbReference>
<dbReference type="AGR" id="HGNC:30711"/>
<dbReference type="CTD" id="126820"/>
<dbReference type="DisGeNET" id="126820"/>
<dbReference type="GeneCards" id="DNAI3"/>
<dbReference type="HGNC" id="HGNC:30711">
    <property type="gene designation" value="DNAI3"/>
</dbReference>
<dbReference type="HPA" id="ENSG00000162643">
    <property type="expression patterns" value="Group enriched (adrenal gland, choroid plexus, fallopian tube, testis)"/>
</dbReference>
<dbReference type="MIM" id="617968">
    <property type="type" value="gene"/>
</dbReference>
<dbReference type="neXtProt" id="NX_Q8IWG1"/>
<dbReference type="OpenTargets" id="ENSG00000162643"/>
<dbReference type="VEuPathDB" id="HostDB:ENSG00000162643"/>
<dbReference type="eggNOG" id="KOG1587">
    <property type="taxonomic scope" value="Eukaryota"/>
</dbReference>
<dbReference type="GeneTree" id="ENSGT00940000156924"/>
<dbReference type="HOGENOM" id="CLU_009390_1_0_1"/>
<dbReference type="InParanoid" id="Q8IWG1"/>
<dbReference type="OMA" id="WRKRPCD"/>
<dbReference type="OrthoDB" id="6619788at2759"/>
<dbReference type="PAN-GO" id="Q8IWG1">
    <property type="GO annotations" value="5 GO annotations based on evolutionary models"/>
</dbReference>
<dbReference type="PhylomeDB" id="Q8IWG1"/>
<dbReference type="TreeFam" id="TF326991"/>
<dbReference type="PathwayCommons" id="Q8IWG1"/>
<dbReference type="SignaLink" id="Q8IWG1"/>
<dbReference type="BioGRID-ORCS" id="126820">
    <property type="hits" value="14 hits in 1140 CRISPR screens"/>
</dbReference>
<dbReference type="GenomeRNAi" id="126820"/>
<dbReference type="Pharos" id="Q8IWG1">
    <property type="development level" value="Tdark"/>
</dbReference>
<dbReference type="PRO" id="PR:Q8IWG1"/>
<dbReference type="Proteomes" id="UP000005640">
    <property type="component" value="Chromosome 1"/>
</dbReference>
<dbReference type="RNAct" id="Q8IWG1">
    <property type="molecule type" value="protein"/>
</dbReference>
<dbReference type="Bgee" id="ENSG00000162643">
    <property type="expression patterns" value="Expressed in bronchial epithelial cell and 107 other cell types or tissues"/>
</dbReference>
<dbReference type="ExpressionAtlas" id="Q8IWG1">
    <property type="expression patterns" value="baseline and differential"/>
</dbReference>
<dbReference type="GO" id="GO:0005858">
    <property type="term" value="C:axonemal dynein complex"/>
    <property type="evidence" value="ECO:0000250"/>
    <property type="project" value="UniProtKB"/>
</dbReference>
<dbReference type="GO" id="GO:0005737">
    <property type="term" value="C:cytoplasm"/>
    <property type="evidence" value="ECO:0000314"/>
    <property type="project" value="UniProtKB"/>
</dbReference>
<dbReference type="GO" id="GO:0036156">
    <property type="term" value="C:inner dynein arm"/>
    <property type="evidence" value="ECO:0000318"/>
    <property type="project" value="GO_Central"/>
</dbReference>
<dbReference type="GO" id="GO:0071933">
    <property type="term" value="F:Arp2/3 complex binding"/>
    <property type="evidence" value="ECO:0000314"/>
    <property type="project" value="UniProtKB"/>
</dbReference>
<dbReference type="GO" id="GO:0045504">
    <property type="term" value="F:dynein heavy chain binding"/>
    <property type="evidence" value="ECO:0000318"/>
    <property type="project" value="GO_Central"/>
</dbReference>
<dbReference type="GO" id="GO:0045503">
    <property type="term" value="F:dynein light chain binding"/>
    <property type="evidence" value="ECO:0000318"/>
    <property type="project" value="GO_Central"/>
</dbReference>
<dbReference type="GO" id="GO:0060294">
    <property type="term" value="P:cilium movement involved in cell motility"/>
    <property type="evidence" value="ECO:0000318"/>
    <property type="project" value="GO_Central"/>
</dbReference>
<dbReference type="GO" id="GO:0036159">
    <property type="term" value="P:inner dynein arm assembly"/>
    <property type="evidence" value="ECO:0000318"/>
    <property type="project" value="GO_Central"/>
</dbReference>
<dbReference type="GO" id="GO:0034316">
    <property type="term" value="P:negative regulation of Arp2/3 complex-mediated actin nucleation"/>
    <property type="evidence" value="ECO:0000315"/>
    <property type="project" value="UniProtKB"/>
</dbReference>
<dbReference type="GO" id="GO:0030336">
    <property type="term" value="P:negative regulation of cell migration"/>
    <property type="evidence" value="ECO:0000315"/>
    <property type="project" value="UniProtKB"/>
</dbReference>
<dbReference type="GO" id="GO:0045669">
    <property type="term" value="P:positive regulation of osteoblast differentiation"/>
    <property type="evidence" value="ECO:0000250"/>
    <property type="project" value="UniProtKB"/>
</dbReference>
<dbReference type="FunFam" id="2.130.10.10:FF:000415">
    <property type="entry name" value="WD repeat domain 63"/>
    <property type="match status" value="1"/>
</dbReference>
<dbReference type="Gene3D" id="2.130.10.10">
    <property type="entry name" value="YVTN repeat-like/Quinoprotein amine dehydrogenase"/>
    <property type="match status" value="2"/>
</dbReference>
<dbReference type="InterPro" id="IPR050687">
    <property type="entry name" value="Dynein_IC"/>
</dbReference>
<dbReference type="InterPro" id="IPR015943">
    <property type="entry name" value="WD40/YVTN_repeat-like_dom_sf"/>
</dbReference>
<dbReference type="InterPro" id="IPR036322">
    <property type="entry name" value="WD40_repeat_dom_sf"/>
</dbReference>
<dbReference type="InterPro" id="IPR001680">
    <property type="entry name" value="WD40_rpt"/>
</dbReference>
<dbReference type="PANTHER" id="PTHR12442:SF5">
    <property type="entry name" value="DYNEIN AXONEMAL INTERMEDIATE CHAIN 3"/>
    <property type="match status" value="1"/>
</dbReference>
<dbReference type="PANTHER" id="PTHR12442">
    <property type="entry name" value="DYNEIN INTERMEDIATE CHAIN"/>
    <property type="match status" value="1"/>
</dbReference>
<dbReference type="SMART" id="SM00320">
    <property type="entry name" value="WD40"/>
    <property type="match status" value="3"/>
</dbReference>
<dbReference type="SUPFAM" id="SSF50978">
    <property type="entry name" value="WD40 repeat-like"/>
    <property type="match status" value="1"/>
</dbReference>
<dbReference type="PROSITE" id="PS00678">
    <property type="entry name" value="WD_REPEATS_1"/>
    <property type="match status" value="2"/>
</dbReference>
<comment type="function">
    <text evidence="1 5">Acts as a negative regulator of cell migration, invasion, and metastasis downstream of p53/TP53, through inhibition of Arp2/3 complex-mediated actin polymerization (PubMed:32128961). Via its association with the multisubunit axonemal dynein complex, is potentially involved in the regulation of cilia function (By similarity). May play a role in osteogenesis of dental tissue-derived mesenchymal stem cells (By similarity).</text>
</comment>
<comment type="subunit">
    <text evidence="1 5">Interacts with ACTR2; this interaction reduces binding of the Arp2/3 complex to the VCA domain of nucleation promoting factors (PubMed:32128961). Part of the multisubunit axonemal dynein complex formed at least of two heavy chains and a number of intermediate and light chains. Found in a associated with the catalytic heavy chain DNAH2, the intermediate chain DNAI4, and the light chain DYNLT1 (By similarity).</text>
</comment>
<comment type="subcellular location">
    <subcellularLocation>
        <location evidence="5">Cytoplasm</location>
    </subcellularLocation>
</comment>
<comment type="alternative products">
    <event type="alternative splicing"/>
    <isoform>
        <id>Q8IWG1-1</id>
        <name>1</name>
        <sequence type="displayed"/>
    </isoform>
    <isoform>
        <id>Q8IWG1-2</id>
        <name>2</name>
        <sequence type="described" ref="VSP_018080"/>
    </isoform>
</comment>
<comment type="induction">
    <text evidence="5">Up-regulated at the transcriptional level by TP53.</text>
</comment>
<comment type="disease">
    <text evidence="4">A rare heterozygous in-frame DNAI3 deletion encompassing exons 14-17 has been found in a fetus with encephalocele. Overexpression of human DNAI3 RNA lacking exons 14-17 in zebrafish embryos also results in similar brain malformations, suggesting that DNAI3 defects might be involved in encephalocele formation.</text>
</comment>
<feature type="chain" id="PRO_0000233162" description="Dynein axonemal intermediate chain 3">
    <location>
        <begin position="1"/>
        <end position="891"/>
    </location>
</feature>
<feature type="repeat" description="WD 1" evidence="2">
    <location>
        <begin position="395"/>
        <end position="435"/>
    </location>
</feature>
<feature type="repeat" description="WD 2" evidence="2">
    <location>
        <begin position="477"/>
        <end position="533"/>
    </location>
</feature>
<feature type="repeat" description="WD 3" evidence="2">
    <location>
        <begin position="670"/>
        <end position="709"/>
    </location>
</feature>
<feature type="repeat" description="WD 4" evidence="2">
    <location>
        <begin position="713"/>
        <end position="753"/>
    </location>
</feature>
<feature type="region of interest" description="Disordered" evidence="3">
    <location>
        <begin position="1"/>
        <end position="22"/>
    </location>
</feature>
<feature type="coiled-coil region" evidence="2">
    <location>
        <begin position="818"/>
        <end position="861"/>
    </location>
</feature>
<feature type="compositionally biased region" description="Basic residues" evidence="3">
    <location>
        <begin position="1"/>
        <end position="17"/>
    </location>
</feature>
<feature type="splice variant" id="VSP_018080" description="In isoform 2." evidence="6">
    <original>WTYPKNATTQYYPREFSEEEKETLKQSKPLVDFLNNASIS</original>
    <variation>C</variation>
    <location>
        <begin position="247"/>
        <end position="286"/>
    </location>
</feature>
<feature type="sequence variant" id="VAR_057630" description="In dbSNP:rs17121745.">
    <original>T</original>
    <variation>A</variation>
    <location>
        <position position="674"/>
    </location>
</feature>
<feature type="sequence variant" id="VAR_057631" description="In dbSNP:rs709783.">
    <original>R</original>
    <variation>H</variation>
    <location>
        <position position="798"/>
    </location>
</feature>
<feature type="sequence conflict" description="In Ref. 1; AAL06239." evidence="7" ref="1">
    <original>K</original>
    <variation>E</variation>
    <location>
        <position position="108"/>
    </location>
</feature>
<feature type="sequence conflict" description="In Ref. 1; AAL06239." evidence="7" ref="1">
    <original>G</original>
    <variation>D</variation>
    <location>
        <position position="441"/>
    </location>
</feature>
<feature type="sequence conflict" description="In Ref. 1; AAL06239." evidence="7" ref="1">
    <original>R</original>
    <variation>G</variation>
    <location>
        <position position="496"/>
    </location>
</feature>
<evidence type="ECO:0000250" key="1">
    <source>
        <dbReference type="UniProtKB" id="B2RY71"/>
    </source>
</evidence>
<evidence type="ECO:0000255" key="2"/>
<evidence type="ECO:0000256" key="3">
    <source>
        <dbReference type="SAM" id="MobiDB-lite"/>
    </source>
</evidence>
<evidence type="ECO:0000269" key="4">
    <source>
    </source>
</evidence>
<evidence type="ECO:0000269" key="5">
    <source>
    </source>
</evidence>
<evidence type="ECO:0000303" key="6">
    <source>
    </source>
</evidence>
<evidence type="ECO:0000305" key="7"/>
<evidence type="ECO:0000312" key="8">
    <source>
        <dbReference type="HGNC" id="HGNC:30711"/>
    </source>
</evidence>
<name>DNAI3_HUMAN</name>
<sequence length="891" mass="102935">MAPKQKKKTSRGKKRLKPVLAASEDMEPVNMESMGHPEIYPLVLTTKTQEIFNCRIDEDVTDEQPYKLINKEDIFEDLRNRAAVSDFHPVKKIVQEYPGNELLLVYDKDFKYGLNFYLIATEEGKENYLNPPEVPEEQEEYKEHIPEDVYIYKPPVSKPWVSLGSEKEIEEESVTESTKQITYMISRKRSEFGAPIKFSDQNASSVKDAYIECTAYPDKNFTLKQLEKDVGMQVIPQIKDISTQTKWTYPKNATTQYYPREFSEEEKETLKQSKPLVDFLNNASISVEIALQQNEIMNTFIDDWKYLAEEEGTFGDKTDTHLKEYQSFTDLHSPTEKMITCVSWHPTIYGLIAVSVAVRLSFEDRVHFSGKLLLQPSLILFWSFSDPIHPQLMLESPDDIFCFKFCPSDPNIIAGGCINGQIVMWDITAHADRIENIKAGGSRSKRATLKPMFLLEPESNKEAMYIRHCAVSSIENGHKKVITDIHWLSDTFEINRMGSVFENRSGICCQLVTCSADCTICFWDIRPQKPLTPQTTEKKKEESIEIPFDVPSTFLHLDLSWKPLTKVRLSKGETSLDHCPTKISLNEDHLLCKTQDKMLAQSKTEKAEEMNPYHNLESGMANLLKPIDDFCTKFFVGTEEGEVIYTDWKMEKDPETGRLMSKKPVSHHTIHDGTVHTIQRSPFYNDIILTVGGWNVAIWKEGVMTGPLLQSCCAPKRYTSGHWSLTRPGVFYIGREDGYIDIWDLLEKTHEPAQSQNICITMITYIKPWIFSSKQQFIATADYYGTLHILEIPWTLSRPSTNEMASVNHYFEREVKHLEYVEQRKKIREQEKKEMELEMAKKKVKTYQKSKEQMQAELKMDYESYLELEKTVLINLGLIKVTEKGSYMEVM</sequence>
<proteinExistence type="evidence at protein level"/>
<protein>
    <recommendedName>
        <fullName evidence="7">Dynein axonemal intermediate chain 3</fullName>
    </recommendedName>
    <alternativeName>
        <fullName>Testis development protein NYD-SP29</fullName>
    </alternativeName>
    <alternativeName>
        <fullName>WD repeat-containing protein 63</fullName>
    </alternativeName>
</protein>
<keyword id="KW-0002">3D-structure</keyword>
<keyword id="KW-0025">Alternative splicing</keyword>
<keyword id="KW-0175">Coiled coil</keyword>
<keyword id="KW-0963">Cytoplasm</keyword>
<keyword id="KW-1267">Proteomics identification</keyword>
<keyword id="KW-1185">Reference proteome</keyword>
<keyword id="KW-0677">Repeat</keyword>
<keyword id="KW-0853">WD repeat</keyword>
<reference key="1">
    <citation type="submission" date="2001-07" db="EMBL/GenBank/DDBJ databases">
        <title>NYD-SP29: a new gene related to testis development.</title>
        <authorList>
            <person name="Sha J.H."/>
        </authorList>
    </citation>
    <scope>NUCLEOTIDE SEQUENCE [MRNA] (ISOFORM 1)</scope>
    <source>
        <tissue>Testis</tissue>
    </source>
</reference>
<reference key="2">
    <citation type="journal article" date="2004" name="Nat. Genet.">
        <title>Complete sequencing and characterization of 21,243 full-length human cDNAs.</title>
        <authorList>
            <person name="Ota T."/>
            <person name="Suzuki Y."/>
            <person name="Nishikawa T."/>
            <person name="Otsuki T."/>
            <person name="Sugiyama T."/>
            <person name="Irie R."/>
            <person name="Wakamatsu A."/>
            <person name="Hayashi K."/>
            <person name="Sato H."/>
            <person name="Nagai K."/>
            <person name="Kimura K."/>
            <person name="Makita H."/>
            <person name="Sekine M."/>
            <person name="Obayashi M."/>
            <person name="Nishi T."/>
            <person name="Shibahara T."/>
            <person name="Tanaka T."/>
            <person name="Ishii S."/>
            <person name="Yamamoto J."/>
            <person name="Saito K."/>
            <person name="Kawai Y."/>
            <person name="Isono Y."/>
            <person name="Nakamura Y."/>
            <person name="Nagahari K."/>
            <person name="Murakami K."/>
            <person name="Yasuda T."/>
            <person name="Iwayanagi T."/>
            <person name="Wagatsuma M."/>
            <person name="Shiratori A."/>
            <person name="Sudo H."/>
            <person name="Hosoiri T."/>
            <person name="Kaku Y."/>
            <person name="Kodaira H."/>
            <person name="Kondo H."/>
            <person name="Sugawara M."/>
            <person name="Takahashi M."/>
            <person name="Kanda K."/>
            <person name="Yokoi T."/>
            <person name="Furuya T."/>
            <person name="Kikkawa E."/>
            <person name="Omura Y."/>
            <person name="Abe K."/>
            <person name="Kamihara K."/>
            <person name="Katsuta N."/>
            <person name="Sato K."/>
            <person name="Tanikawa M."/>
            <person name="Yamazaki M."/>
            <person name="Ninomiya K."/>
            <person name="Ishibashi T."/>
            <person name="Yamashita H."/>
            <person name="Murakawa K."/>
            <person name="Fujimori K."/>
            <person name="Tanai H."/>
            <person name="Kimata M."/>
            <person name="Watanabe M."/>
            <person name="Hiraoka S."/>
            <person name="Chiba Y."/>
            <person name="Ishida S."/>
            <person name="Ono Y."/>
            <person name="Takiguchi S."/>
            <person name="Watanabe S."/>
            <person name="Yosida M."/>
            <person name="Hotuta T."/>
            <person name="Kusano J."/>
            <person name="Kanehori K."/>
            <person name="Takahashi-Fujii A."/>
            <person name="Hara H."/>
            <person name="Tanase T.-O."/>
            <person name="Nomura Y."/>
            <person name="Togiya S."/>
            <person name="Komai F."/>
            <person name="Hara R."/>
            <person name="Takeuchi K."/>
            <person name="Arita M."/>
            <person name="Imose N."/>
            <person name="Musashino K."/>
            <person name="Yuuki H."/>
            <person name="Oshima A."/>
            <person name="Sasaki N."/>
            <person name="Aotsuka S."/>
            <person name="Yoshikawa Y."/>
            <person name="Matsunawa H."/>
            <person name="Ichihara T."/>
            <person name="Shiohata N."/>
            <person name="Sano S."/>
            <person name="Moriya S."/>
            <person name="Momiyama H."/>
            <person name="Satoh N."/>
            <person name="Takami S."/>
            <person name="Terashima Y."/>
            <person name="Suzuki O."/>
            <person name="Nakagawa S."/>
            <person name="Senoh A."/>
            <person name="Mizoguchi H."/>
            <person name="Goto Y."/>
            <person name="Shimizu F."/>
            <person name="Wakebe H."/>
            <person name="Hishigaki H."/>
            <person name="Watanabe T."/>
            <person name="Sugiyama A."/>
            <person name="Takemoto M."/>
            <person name="Kawakami B."/>
            <person name="Yamazaki M."/>
            <person name="Watanabe K."/>
            <person name="Kumagai A."/>
            <person name="Itakura S."/>
            <person name="Fukuzumi Y."/>
            <person name="Fujimori Y."/>
            <person name="Komiyama M."/>
            <person name="Tashiro H."/>
            <person name="Tanigami A."/>
            <person name="Fujiwara T."/>
            <person name="Ono T."/>
            <person name="Yamada K."/>
            <person name="Fujii Y."/>
            <person name="Ozaki K."/>
            <person name="Hirao M."/>
            <person name="Ohmori Y."/>
            <person name="Kawabata A."/>
            <person name="Hikiji T."/>
            <person name="Kobatake N."/>
            <person name="Inagaki H."/>
            <person name="Ikema Y."/>
            <person name="Okamoto S."/>
            <person name="Okitani R."/>
            <person name="Kawakami T."/>
            <person name="Noguchi S."/>
            <person name="Itoh T."/>
            <person name="Shigeta K."/>
            <person name="Senba T."/>
            <person name="Matsumura K."/>
            <person name="Nakajima Y."/>
            <person name="Mizuno T."/>
            <person name="Morinaga M."/>
            <person name="Sasaki M."/>
            <person name="Togashi T."/>
            <person name="Oyama M."/>
            <person name="Hata H."/>
            <person name="Watanabe M."/>
            <person name="Komatsu T."/>
            <person name="Mizushima-Sugano J."/>
            <person name="Satoh T."/>
            <person name="Shirai Y."/>
            <person name="Takahashi Y."/>
            <person name="Nakagawa K."/>
            <person name="Okumura K."/>
            <person name="Nagase T."/>
            <person name="Nomura N."/>
            <person name="Kikuchi H."/>
            <person name="Masuho Y."/>
            <person name="Yamashita R."/>
            <person name="Nakai K."/>
            <person name="Yada T."/>
            <person name="Nakamura Y."/>
            <person name="Ohara O."/>
            <person name="Isogai T."/>
            <person name="Sugano S."/>
        </authorList>
    </citation>
    <scope>NUCLEOTIDE SEQUENCE [LARGE SCALE MRNA] (ISOFORMS 1 AND 2)</scope>
    <source>
        <tissue>Astrocyte</tissue>
        <tissue>Testis</tissue>
    </source>
</reference>
<reference key="3">
    <citation type="journal article" date="2006" name="Nature">
        <title>The DNA sequence and biological annotation of human chromosome 1.</title>
        <authorList>
            <person name="Gregory S.G."/>
            <person name="Barlow K.F."/>
            <person name="McLay K.E."/>
            <person name="Kaul R."/>
            <person name="Swarbreck D."/>
            <person name="Dunham A."/>
            <person name="Scott C.E."/>
            <person name="Howe K.L."/>
            <person name="Woodfine K."/>
            <person name="Spencer C.C.A."/>
            <person name="Jones M.C."/>
            <person name="Gillson C."/>
            <person name="Searle S."/>
            <person name="Zhou Y."/>
            <person name="Kokocinski F."/>
            <person name="McDonald L."/>
            <person name="Evans R."/>
            <person name="Phillips K."/>
            <person name="Atkinson A."/>
            <person name="Cooper R."/>
            <person name="Jones C."/>
            <person name="Hall R.E."/>
            <person name="Andrews T.D."/>
            <person name="Lloyd C."/>
            <person name="Ainscough R."/>
            <person name="Almeida J.P."/>
            <person name="Ambrose K.D."/>
            <person name="Anderson F."/>
            <person name="Andrew R.W."/>
            <person name="Ashwell R.I.S."/>
            <person name="Aubin K."/>
            <person name="Babbage A.K."/>
            <person name="Bagguley C.L."/>
            <person name="Bailey J."/>
            <person name="Beasley H."/>
            <person name="Bethel G."/>
            <person name="Bird C.P."/>
            <person name="Bray-Allen S."/>
            <person name="Brown J.Y."/>
            <person name="Brown A.J."/>
            <person name="Buckley D."/>
            <person name="Burton J."/>
            <person name="Bye J."/>
            <person name="Carder C."/>
            <person name="Chapman J.C."/>
            <person name="Clark S.Y."/>
            <person name="Clarke G."/>
            <person name="Clee C."/>
            <person name="Cobley V."/>
            <person name="Collier R.E."/>
            <person name="Corby N."/>
            <person name="Coville G.J."/>
            <person name="Davies J."/>
            <person name="Deadman R."/>
            <person name="Dunn M."/>
            <person name="Earthrowl M."/>
            <person name="Ellington A.G."/>
            <person name="Errington H."/>
            <person name="Frankish A."/>
            <person name="Frankland J."/>
            <person name="French L."/>
            <person name="Garner P."/>
            <person name="Garnett J."/>
            <person name="Gay L."/>
            <person name="Ghori M.R.J."/>
            <person name="Gibson R."/>
            <person name="Gilby L.M."/>
            <person name="Gillett W."/>
            <person name="Glithero R.J."/>
            <person name="Grafham D.V."/>
            <person name="Griffiths C."/>
            <person name="Griffiths-Jones S."/>
            <person name="Grocock R."/>
            <person name="Hammond S."/>
            <person name="Harrison E.S.I."/>
            <person name="Hart E."/>
            <person name="Haugen E."/>
            <person name="Heath P.D."/>
            <person name="Holmes S."/>
            <person name="Holt K."/>
            <person name="Howden P.J."/>
            <person name="Hunt A.R."/>
            <person name="Hunt S.E."/>
            <person name="Hunter G."/>
            <person name="Isherwood J."/>
            <person name="James R."/>
            <person name="Johnson C."/>
            <person name="Johnson D."/>
            <person name="Joy A."/>
            <person name="Kay M."/>
            <person name="Kershaw J.K."/>
            <person name="Kibukawa M."/>
            <person name="Kimberley A.M."/>
            <person name="King A."/>
            <person name="Knights A.J."/>
            <person name="Lad H."/>
            <person name="Laird G."/>
            <person name="Lawlor S."/>
            <person name="Leongamornlert D.A."/>
            <person name="Lloyd D.M."/>
            <person name="Loveland J."/>
            <person name="Lovell J."/>
            <person name="Lush M.J."/>
            <person name="Lyne R."/>
            <person name="Martin S."/>
            <person name="Mashreghi-Mohammadi M."/>
            <person name="Matthews L."/>
            <person name="Matthews N.S.W."/>
            <person name="McLaren S."/>
            <person name="Milne S."/>
            <person name="Mistry S."/>
            <person name="Moore M.J.F."/>
            <person name="Nickerson T."/>
            <person name="O'Dell C.N."/>
            <person name="Oliver K."/>
            <person name="Palmeiri A."/>
            <person name="Palmer S.A."/>
            <person name="Parker A."/>
            <person name="Patel D."/>
            <person name="Pearce A.V."/>
            <person name="Peck A.I."/>
            <person name="Pelan S."/>
            <person name="Phelps K."/>
            <person name="Phillimore B.J."/>
            <person name="Plumb R."/>
            <person name="Rajan J."/>
            <person name="Raymond C."/>
            <person name="Rouse G."/>
            <person name="Saenphimmachak C."/>
            <person name="Sehra H.K."/>
            <person name="Sheridan E."/>
            <person name="Shownkeen R."/>
            <person name="Sims S."/>
            <person name="Skuce C.D."/>
            <person name="Smith M."/>
            <person name="Steward C."/>
            <person name="Subramanian S."/>
            <person name="Sycamore N."/>
            <person name="Tracey A."/>
            <person name="Tromans A."/>
            <person name="Van Helmond Z."/>
            <person name="Wall M."/>
            <person name="Wallis J.M."/>
            <person name="White S."/>
            <person name="Whitehead S.L."/>
            <person name="Wilkinson J.E."/>
            <person name="Willey D.L."/>
            <person name="Williams H."/>
            <person name="Wilming L."/>
            <person name="Wray P.W."/>
            <person name="Wu Z."/>
            <person name="Coulson A."/>
            <person name="Vaudin M."/>
            <person name="Sulston J.E."/>
            <person name="Durbin R.M."/>
            <person name="Hubbard T."/>
            <person name="Wooster R."/>
            <person name="Dunham I."/>
            <person name="Carter N.P."/>
            <person name="McVean G."/>
            <person name="Ross M.T."/>
            <person name="Harrow J."/>
            <person name="Olson M.V."/>
            <person name="Beck S."/>
            <person name="Rogers J."/>
            <person name="Bentley D.R."/>
        </authorList>
    </citation>
    <scope>NUCLEOTIDE SEQUENCE [LARGE SCALE GENOMIC DNA]</scope>
</reference>
<reference key="4">
    <citation type="submission" date="2005-09" db="EMBL/GenBank/DDBJ databases">
        <authorList>
            <person name="Mural R.J."/>
            <person name="Istrail S."/>
            <person name="Sutton G.G."/>
            <person name="Florea L."/>
            <person name="Halpern A.L."/>
            <person name="Mobarry C.M."/>
            <person name="Lippert R."/>
            <person name="Walenz B."/>
            <person name="Shatkay H."/>
            <person name="Dew I."/>
            <person name="Miller J.R."/>
            <person name="Flanigan M.J."/>
            <person name="Edwards N.J."/>
            <person name="Bolanos R."/>
            <person name="Fasulo D."/>
            <person name="Halldorsson B.V."/>
            <person name="Hannenhalli S."/>
            <person name="Turner R."/>
            <person name="Yooseph S."/>
            <person name="Lu F."/>
            <person name="Nusskern D.R."/>
            <person name="Shue B.C."/>
            <person name="Zheng X.H."/>
            <person name="Zhong F."/>
            <person name="Delcher A.L."/>
            <person name="Huson D.H."/>
            <person name="Kravitz S.A."/>
            <person name="Mouchard L."/>
            <person name="Reinert K."/>
            <person name="Remington K.A."/>
            <person name="Clark A.G."/>
            <person name="Waterman M.S."/>
            <person name="Eichler E.E."/>
            <person name="Adams M.D."/>
            <person name="Hunkapiller M.W."/>
            <person name="Myers E.W."/>
            <person name="Venter J.C."/>
        </authorList>
    </citation>
    <scope>NUCLEOTIDE SEQUENCE [LARGE SCALE GENOMIC DNA]</scope>
</reference>
<reference key="5">
    <citation type="journal article" date="2004" name="Genome Res.">
        <title>The status, quality, and expansion of the NIH full-length cDNA project: the Mammalian Gene Collection (MGC).</title>
        <authorList>
            <consortium name="The MGC Project Team"/>
        </authorList>
    </citation>
    <scope>NUCLEOTIDE SEQUENCE [LARGE SCALE MRNA] (ISOFORM 1)</scope>
    <source>
        <tissue>Brain</tissue>
    </source>
</reference>
<reference key="6">
    <citation type="journal article" date="2011" name="Cytoskeleton">
        <title>A unified taxonomy for ciliary dyneins.</title>
        <authorList>
            <person name="Hom E.F."/>
            <person name="Witman G.B."/>
            <person name="Harris E.H."/>
            <person name="Dutcher S.K."/>
            <person name="Kamiya R."/>
            <person name="Mitchell D.R."/>
            <person name="Pazour G.J."/>
            <person name="Porter M.E."/>
            <person name="Sale W.S."/>
            <person name="Wirschell M."/>
            <person name="Yagi T."/>
            <person name="King S.M."/>
        </authorList>
    </citation>
    <scope>NOMENCLATURE</scope>
</reference>
<reference key="7">
    <citation type="journal article" date="2018" name="Hum. Mutat.">
        <title>Targeted copy number screening highlights an intragenic deletion of WDR63 as the likely cause of human occipital encephalocele and abnormal CNS development in zebrafish.</title>
        <authorList>
            <person name="Hofmeister W."/>
            <person name="Pettersson M."/>
            <person name="Kurtoglu D."/>
            <person name="Armenio M."/>
            <person name="Eisfeldt J."/>
            <person name="Papadogiannakis N."/>
            <person name="Gustavsson P."/>
            <person name="Lindstrand A."/>
        </authorList>
    </citation>
    <scope>POSSIBLE INVOLVEMENT IN DISEASE</scope>
</reference>
<reference key="8">
    <citation type="journal article" date="2020" name="EMBO Rep.">
        <title>WDR63 inhibits Arp2/3-dependent actin polymerization and mediates the function of p53 in suppressing metastasis.</title>
        <authorList>
            <person name="Zhao K."/>
            <person name="Wang D."/>
            <person name="Zhao X."/>
            <person name="Wang C."/>
            <person name="Gao Y."/>
            <person name="Liu K."/>
            <person name="Wang F."/>
            <person name="Wu X."/>
            <person name="Wang X."/>
            <person name="Sun L."/>
            <person name="Zang J."/>
            <person name="Mei Y."/>
        </authorList>
    </citation>
    <scope>SUBCELLULAR LOCATION</scope>
    <scope>INTERACTION WITH ACTR2</scope>
    <scope>FUNCTION</scope>
    <scope>INDUCTION</scope>
</reference>